<dbReference type="EC" id="2.7.4.6" evidence="1"/>
<dbReference type="EMBL" id="CP000030">
    <property type="protein sequence ID" value="AAV86983.1"/>
    <property type="molecule type" value="Genomic_DNA"/>
</dbReference>
<dbReference type="SMR" id="Q5P9P7"/>
<dbReference type="KEGG" id="ama:AM1137"/>
<dbReference type="HOGENOM" id="CLU_060216_8_1_5"/>
<dbReference type="GO" id="GO:0005737">
    <property type="term" value="C:cytoplasm"/>
    <property type="evidence" value="ECO:0007669"/>
    <property type="project" value="UniProtKB-SubCell"/>
</dbReference>
<dbReference type="GO" id="GO:0005524">
    <property type="term" value="F:ATP binding"/>
    <property type="evidence" value="ECO:0007669"/>
    <property type="project" value="UniProtKB-UniRule"/>
</dbReference>
<dbReference type="GO" id="GO:0046872">
    <property type="term" value="F:metal ion binding"/>
    <property type="evidence" value="ECO:0007669"/>
    <property type="project" value="UniProtKB-KW"/>
</dbReference>
<dbReference type="GO" id="GO:0004550">
    <property type="term" value="F:nucleoside diphosphate kinase activity"/>
    <property type="evidence" value="ECO:0007669"/>
    <property type="project" value="UniProtKB-UniRule"/>
</dbReference>
<dbReference type="GO" id="GO:0006241">
    <property type="term" value="P:CTP biosynthetic process"/>
    <property type="evidence" value="ECO:0007669"/>
    <property type="project" value="UniProtKB-UniRule"/>
</dbReference>
<dbReference type="GO" id="GO:0006183">
    <property type="term" value="P:GTP biosynthetic process"/>
    <property type="evidence" value="ECO:0007669"/>
    <property type="project" value="UniProtKB-UniRule"/>
</dbReference>
<dbReference type="GO" id="GO:0006228">
    <property type="term" value="P:UTP biosynthetic process"/>
    <property type="evidence" value="ECO:0007669"/>
    <property type="project" value="UniProtKB-UniRule"/>
</dbReference>
<dbReference type="CDD" id="cd04413">
    <property type="entry name" value="NDPk_I"/>
    <property type="match status" value="1"/>
</dbReference>
<dbReference type="FunFam" id="3.30.70.141:FF:000003">
    <property type="entry name" value="Nucleoside diphosphate kinase"/>
    <property type="match status" value="1"/>
</dbReference>
<dbReference type="Gene3D" id="3.30.70.141">
    <property type="entry name" value="Nucleoside diphosphate kinase-like domain"/>
    <property type="match status" value="1"/>
</dbReference>
<dbReference type="HAMAP" id="MF_00451">
    <property type="entry name" value="NDP_kinase"/>
    <property type="match status" value="1"/>
</dbReference>
<dbReference type="InterPro" id="IPR034907">
    <property type="entry name" value="NDK-like_dom"/>
</dbReference>
<dbReference type="InterPro" id="IPR036850">
    <property type="entry name" value="NDK-like_dom_sf"/>
</dbReference>
<dbReference type="InterPro" id="IPR001564">
    <property type="entry name" value="Nucleoside_diP_kinase"/>
</dbReference>
<dbReference type="InterPro" id="IPR023005">
    <property type="entry name" value="Nucleoside_diP_kinase_AS"/>
</dbReference>
<dbReference type="NCBIfam" id="NF001908">
    <property type="entry name" value="PRK00668.1"/>
    <property type="match status" value="1"/>
</dbReference>
<dbReference type="PANTHER" id="PTHR46161">
    <property type="entry name" value="NUCLEOSIDE DIPHOSPHATE KINASE"/>
    <property type="match status" value="1"/>
</dbReference>
<dbReference type="PANTHER" id="PTHR46161:SF3">
    <property type="entry name" value="NUCLEOSIDE DIPHOSPHATE KINASE DDB_G0292928-RELATED"/>
    <property type="match status" value="1"/>
</dbReference>
<dbReference type="Pfam" id="PF00334">
    <property type="entry name" value="NDK"/>
    <property type="match status" value="1"/>
</dbReference>
<dbReference type="PRINTS" id="PR01243">
    <property type="entry name" value="NUCDPKINASE"/>
</dbReference>
<dbReference type="SMART" id="SM00562">
    <property type="entry name" value="NDK"/>
    <property type="match status" value="1"/>
</dbReference>
<dbReference type="SUPFAM" id="SSF54919">
    <property type="entry name" value="Nucleoside diphosphate kinase, NDK"/>
    <property type="match status" value="1"/>
</dbReference>
<dbReference type="PROSITE" id="PS00469">
    <property type="entry name" value="NDPK"/>
    <property type="match status" value="1"/>
</dbReference>
<dbReference type="PROSITE" id="PS51374">
    <property type="entry name" value="NDPK_LIKE"/>
    <property type="match status" value="1"/>
</dbReference>
<comment type="function">
    <text evidence="1">Major role in the synthesis of nucleoside triphosphates other than ATP. The ATP gamma phosphate is transferred to the NDP beta phosphate via a ping-pong mechanism, using a phosphorylated active-site intermediate.</text>
</comment>
<comment type="catalytic activity">
    <reaction evidence="1">
        <text>a 2'-deoxyribonucleoside 5'-diphosphate + ATP = a 2'-deoxyribonucleoside 5'-triphosphate + ADP</text>
        <dbReference type="Rhea" id="RHEA:44640"/>
        <dbReference type="ChEBI" id="CHEBI:30616"/>
        <dbReference type="ChEBI" id="CHEBI:61560"/>
        <dbReference type="ChEBI" id="CHEBI:73316"/>
        <dbReference type="ChEBI" id="CHEBI:456216"/>
        <dbReference type="EC" id="2.7.4.6"/>
    </reaction>
</comment>
<comment type="catalytic activity">
    <reaction evidence="1">
        <text>a ribonucleoside 5'-diphosphate + ATP = a ribonucleoside 5'-triphosphate + ADP</text>
        <dbReference type="Rhea" id="RHEA:18113"/>
        <dbReference type="ChEBI" id="CHEBI:30616"/>
        <dbReference type="ChEBI" id="CHEBI:57930"/>
        <dbReference type="ChEBI" id="CHEBI:61557"/>
        <dbReference type="ChEBI" id="CHEBI:456216"/>
        <dbReference type="EC" id="2.7.4.6"/>
    </reaction>
</comment>
<comment type="cofactor">
    <cofactor evidence="1">
        <name>Mg(2+)</name>
        <dbReference type="ChEBI" id="CHEBI:18420"/>
    </cofactor>
</comment>
<comment type="subunit">
    <text evidence="1">Homotetramer.</text>
</comment>
<comment type="subcellular location">
    <subcellularLocation>
        <location evidence="1">Cytoplasm</location>
    </subcellularLocation>
</comment>
<comment type="similarity">
    <text evidence="1">Belongs to the NDK family.</text>
</comment>
<feature type="chain" id="PRO_0000136934" description="Nucleoside diphosphate kinase">
    <location>
        <begin position="1"/>
        <end position="146"/>
    </location>
</feature>
<feature type="active site" description="Pros-phosphohistidine intermediate" evidence="1">
    <location>
        <position position="117"/>
    </location>
</feature>
<feature type="binding site" evidence="1">
    <location>
        <position position="11"/>
    </location>
    <ligand>
        <name>ATP</name>
        <dbReference type="ChEBI" id="CHEBI:30616"/>
    </ligand>
</feature>
<feature type="binding site" evidence="1">
    <location>
        <position position="59"/>
    </location>
    <ligand>
        <name>ATP</name>
        <dbReference type="ChEBI" id="CHEBI:30616"/>
    </ligand>
</feature>
<feature type="binding site" evidence="1">
    <location>
        <position position="87"/>
    </location>
    <ligand>
        <name>ATP</name>
        <dbReference type="ChEBI" id="CHEBI:30616"/>
    </ligand>
</feature>
<feature type="binding site" evidence="1">
    <location>
        <position position="93"/>
    </location>
    <ligand>
        <name>ATP</name>
        <dbReference type="ChEBI" id="CHEBI:30616"/>
    </ligand>
</feature>
<feature type="binding site" evidence="1">
    <location>
        <position position="104"/>
    </location>
    <ligand>
        <name>ATP</name>
        <dbReference type="ChEBI" id="CHEBI:30616"/>
    </ligand>
</feature>
<feature type="binding site" evidence="1">
    <location>
        <position position="114"/>
    </location>
    <ligand>
        <name>ATP</name>
        <dbReference type="ChEBI" id="CHEBI:30616"/>
    </ligand>
</feature>
<accession>Q5P9P7</accession>
<organism>
    <name type="scientific">Anaplasma marginale (strain St. Maries)</name>
    <dbReference type="NCBI Taxonomy" id="234826"/>
    <lineage>
        <taxon>Bacteria</taxon>
        <taxon>Pseudomonadati</taxon>
        <taxon>Pseudomonadota</taxon>
        <taxon>Alphaproteobacteria</taxon>
        <taxon>Rickettsiales</taxon>
        <taxon>Anaplasmataceae</taxon>
        <taxon>Anaplasma</taxon>
    </lineage>
</organism>
<keyword id="KW-0067">ATP-binding</keyword>
<keyword id="KW-0963">Cytoplasm</keyword>
<keyword id="KW-0418">Kinase</keyword>
<keyword id="KW-0460">Magnesium</keyword>
<keyword id="KW-0479">Metal-binding</keyword>
<keyword id="KW-0546">Nucleotide metabolism</keyword>
<keyword id="KW-0547">Nucleotide-binding</keyword>
<keyword id="KW-0597">Phosphoprotein</keyword>
<keyword id="KW-0808">Transferase</keyword>
<proteinExistence type="inferred from homology"/>
<gene>
    <name evidence="1" type="primary">ndk</name>
    <name type="ordered locus">AM1137</name>
</gene>
<reference key="1">
    <citation type="journal article" date="2005" name="Proc. Natl. Acad. Sci. U.S.A.">
        <title>Complete genome sequencing of Anaplasma marginale reveals that the surface is skewed to two superfamilies of outer membrane proteins.</title>
        <authorList>
            <person name="Brayton K.A."/>
            <person name="Kappmeyer L.S."/>
            <person name="Herndon D.R."/>
            <person name="Dark M.J."/>
            <person name="Tibbals D.L."/>
            <person name="Palmer G.H."/>
            <person name="McGuire T.C."/>
            <person name="Knowles D.P. Jr."/>
        </authorList>
    </citation>
    <scope>NUCLEOTIDE SEQUENCE [LARGE SCALE GENOMIC DNA]</scope>
    <source>
        <strain>St. Maries</strain>
    </source>
</reference>
<sequence>MMFEKTLSILKPDVVERGIIGRVLSYIEAAGLRIVAQRMCALSHEQAEAFYAVHKARPFFPSLVGFMTSGPVVVQVLVGESAVKTYRDVMGATNPSEAAPGTIRGDLAESIDANCVHGSDSLENAEWEIKFFFKEHEIMSSMPNGK</sequence>
<name>NDK_ANAMM</name>
<evidence type="ECO:0000255" key="1">
    <source>
        <dbReference type="HAMAP-Rule" id="MF_00451"/>
    </source>
</evidence>
<protein>
    <recommendedName>
        <fullName evidence="1">Nucleoside diphosphate kinase</fullName>
        <shortName evidence="1">NDK</shortName>
        <shortName evidence="1">NDP kinase</shortName>
        <ecNumber evidence="1">2.7.4.6</ecNumber>
    </recommendedName>
    <alternativeName>
        <fullName evidence="1">Nucleoside-2-P kinase</fullName>
    </alternativeName>
</protein>